<evidence type="ECO:0000250" key="1">
    <source>
        <dbReference type="UniProtKB" id="Q6RYA0"/>
    </source>
</evidence>
<evidence type="ECO:0000269" key="2">
    <source>
    </source>
</evidence>
<evidence type="ECO:0000303" key="3">
    <source>
    </source>
</evidence>
<evidence type="ECO:0000305" key="4"/>
<evidence type="ECO:0000312" key="5">
    <source>
        <dbReference type="Araport" id="AT2G23610"/>
    </source>
</evidence>
<evidence type="ECO:0000312" key="6">
    <source>
        <dbReference type="EMBL" id="AAC23774.1"/>
    </source>
</evidence>
<sequence>MSEEERKQHVVLVHGACHGAWCWYKVKPQLEASGHRVTAVDLAASGIDMTRSITDISTCEQYSEPLMQLMTSLPDDEKVVLVGHSLGGLSLAMAMDMFPTKISVSVFVTAMMPDTKHSPSFVWDKLRKETSREEWLDTVFTSEKPDFPSEFWIFGPEFMAKNLYQLSPVQDLELAKMLVRANPLIKKDMAERRSFSEEGYGSVTRIFIVCGKDLVSPEDYQRSMISNFPPKEVMEIKDADHMPMFSKPQQLCALLLEIANKYA</sequence>
<comment type="function">
    <text evidence="2">Methylesterase shown to have carboxylesterase activity, methyl indole-3-acetic acid (MeIAA) esterase activity and methyl jasmonate (MeJA) esterase activity in vitro.</text>
</comment>
<comment type="catalytic activity">
    <reaction evidence="2">
        <text>methyl (indol-3-yl)acetate + H2O = (indol-3-yl)acetate + methanol + H(+)</text>
        <dbReference type="Rhea" id="RHEA:32919"/>
        <dbReference type="ChEBI" id="CHEBI:15377"/>
        <dbReference type="ChEBI" id="CHEBI:15378"/>
        <dbReference type="ChEBI" id="CHEBI:17790"/>
        <dbReference type="ChEBI" id="CHEBI:30854"/>
        <dbReference type="ChEBI" id="CHEBI:72782"/>
    </reaction>
    <physiologicalReaction direction="left-to-right" evidence="2">
        <dbReference type="Rhea" id="RHEA:32920"/>
    </physiologicalReaction>
</comment>
<comment type="catalytic activity">
    <reaction evidence="2">
        <text>methyl (-)-jasmonate + H2O = jasmonate + methanol + H(+)</text>
        <dbReference type="Rhea" id="RHEA:55372"/>
        <dbReference type="ChEBI" id="CHEBI:15377"/>
        <dbReference type="ChEBI" id="CHEBI:15378"/>
        <dbReference type="ChEBI" id="CHEBI:15929"/>
        <dbReference type="ChEBI" id="CHEBI:17790"/>
        <dbReference type="ChEBI" id="CHEBI:58431"/>
    </reaction>
    <physiologicalReaction direction="left-to-right" evidence="2">
        <dbReference type="Rhea" id="RHEA:55373"/>
    </physiologicalReaction>
</comment>
<comment type="pathway">
    <text evidence="2">Plant hormone biosynthesis.</text>
</comment>
<comment type="pathway">
    <text evidence="2">Lipid metabolism; oxylipin biosynthesis.</text>
</comment>
<comment type="similarity">
    <text evidence="4">Belongs to the AB hydrolase superfamily. Methylesterase family.</text>
</comment>
<organism>
    <name type="scientific">Arabidopsis thaliana</name>
    <name type="common">Mouse-ear cress</name>
    <dbReference type="NCBI Taxonomy" id="3702"/>
    <lineage>
        <taxon>Eukaryota</taxon>
        <taxon>Viridiplantae</taxon>
        <taxon>Streptophyta</taxon>
        <taxon>Embryophyta</taxon>
        <taxon>Tracheophyta</taxon>
        <taxon>Spermatophyta</taxon>
        <taxon>Magnoliopsida</taxon>
        <taxon>eudicotyledons</taxon>
        <taxon>Gunneridae</taxon>
        <taxon>Pentapetalae</taxon>
        <taxon>rosids</taxon>
        <taxon>malvids</taxon>
        <taxon>Brassicales</taxon>
        <taxon>Brassicaceae</taxon>
        <taxon>Camelineae</taxon>
        <taxon>Arabidopsis</taxon>
    </lineage>
</organism>
<protein>
    <recommendedName>
        <fullName evidence="3">Methylesterase 3</fullName>
        <shortName evidence="3">AtMES3</shortName>
        <ecNumber evidence="2">3.1.1.-</ecNumber>
    </recommendedName>
</protein>
<accession>O80477</accession>
<reference key="1">
    <citation type="journal article" date="1999" name="Nature">
        <title>Sequence and analysis of chromosome 2 of the plant Arabidopsis thaliana.</title>
        <authorList>
            <person name="Lin X."/>
            <person name="Kaul S."/>
            <person name="Rounsley S.D."/>
            <person name="Shea T.P."/>
            <person name="Benito M.-I."/>
            <person name="Town C.D."/>
            <person name="Fujii C.Y."/>
            <person name="Mason T.M."/>
            <person name="Bowman C.L."/>
            <person name="Barnstead M.E."/>
            <person name="Feldblyum T.V."/>
            <person name="Buell C.R."/>
            <person name="Ketchum K.A."/>
            <person name="Lee J.J."/>
            <person name="Ronning C.M."/>
            <person name="Koo H.L."/>
            <person name="Moffat K.S."/>
            <person name="Cronin L.A."/>
            <person name="Shen M."/>
            <person name="Pai G."/>
            <person name="Van Aken S."/>
            <person name="Umayam L."/>
            <person name="Tallon L.J."/>
            <person name="Gill J.E."/>
            <person name="Adams M.D."/>
            <person name="Carrera A.J."/>
            <person name="Creasy T.H."/>
            <person name="Goodman H.M."/>
            <person name="Somerville C.R."/>
            <person name="Copenhaver G.P."/>
            <person name="Preuss D."/>
            <person name="Nierman W.C."/>
            <person name="White O."/>
            <person name="Eisen J.A."/>
            <person name="Salzberg S.L."/>
            <person name="Fraser C.M."/>
            <person name="Venter J.C."/>
        </authorList>
    </citation>
    <scope>NUCLEOTIDE SEQUENCE [LARGE SCALE GENOMIC DNA]</scope>
    <source>
        <strain>cv. Columbia</strain>
    </source>
</reference>
<reference key="2">
    <citation type="journal article" date="2017" name="Plant J.">
        <title>Araport11: a complete reannotation of the Arabidopsis thaliana reference genome.</title>
        <authorList>
            <person name="Cheng C.Y."/>
            <person name="Krishnakumar V."/>
            <person name="Chan A.P."/>
            <person name="Thibaud-Nissen F."/>
            <person name="Schobel S."/>
            <person name="Town C.D."/>
        </authorList>
    </citation>
    <scope>GENOME REANNOTATION</scope>
    <source>
        <strain>cv. Columbia</strain>
    </source>
</reference>
<reference key="3">
    <citation type="submission" date="2004-07" db="EMBL/GenBank/DDBJ databases">
        <title>Arabidopsis ORF clones.</title>
        <authorList>
            <person name="Shinn P."/>
            <person name="Chen H."/>
            <person name="Cheuk R.F."/>
            <person name="Kim C.J."/>
            <person name="Ecker J.R."/>
        </authorList>
    </citation>
    <scope>NUCLEOTIDE SEQUENCE [LARGE SCALE MRNA]</scope>
    <source>
        <strain>cv. Columbia</strain>
    </source>
</reference>
<reference key="4">
    <citation type="journal article" date="2008" name="Plant Physiol.">
        <title>Inactive methyl indole-3-acetic acid ester can be hydrolyzed and activated by several esterases belonging to the AtMES esterase family of Arabidopsis.</title>
        <authorList>
            <person name="Yang Y."/>
            <person name="Xu R."/>
            <person name="Ma C.J."/>
            <person name="Vlot A.C."/>
            <person name="Klessig D.F."/>
            <person name="Pichersky E."/>
        </authorList>
    </citation>
    <scope>GENE FAMILY</scope>
    <scope>FUNCTION</scope>
    <scope>CATALYTIC ACTIVITY</scope>
    <scope>PATHWAY</scope>
</reference>
<dbReference type="EC" id="3.1.1.-" evidence="2"/>
<dbReference type="EMBL" id="AC003040">
    <property type="protein sequence ID" value="AAC23774.1"/>
    <property type="molecule type" value="Genomic_DNA"/>
</dbReference>
<dbReference type="EMBL" id="CP002685">
    <property type="protein sequence ID" value="AEC07472.1"/>
    <property type="molecule type" value="Genomic_DNA"/>
</dbReference>
<dbReference type="EMBL" id="BT014901">
    <property type="protein sequence ID" value="AAT46030.1"/>
    <property type="molecule type" value="mRNA"/>
</dbReference>
<dbReference type="EMBL" id="BT015031">
    <property type="protein sequence ID" value="AAT70482.1"/>
    <property type="molecule type" value="mRNA"/>
</dbReference>
<dbReference type="PIR" id="T01150">
    <property type="entry name" value="T01150"/>
</dbReference>
<dbReference type="RefSeq" id="NP_179942.1">
    <property type="nucleotide sequence ID" value="NM_127925.3"/>
</dbReference>
<dbReference type="SMR" id="O80477"/>
<dbReference type="BioGRID" id="2245">
    <property type="interactions" value="1"/>
</dbReference>
<dbReference type="FunCoup" id="O80477">
    <property type="interactions" value="10"/>
</dbReference>
<dbReference type="STRING" id="3702.O80477"/>
<dbReference type="ESTHER" id="arath-MES3">
    <property type="family name" value="Hydroxynitrile_lyase"/>
</dbReference>
<dbReference type="iPTMnet" id="O80477"/>
<dbReference type="PaxDb" id="3702-AT2G23610.1"/>
<dbReference type="ProteomicsDB" id="232249"/>
<dbReference type="EnsemblPlants" id="AT2G23610.1">
    <property type="protein sequence ID" value="AT2G23610.1"/>
    <property type="gene ID" value="AT2G23610"/>
</dbReference>
<dbReference type="GeneID" id="816893"/>
<dbReference type="Gramene" id="AT2G23610.1">
    <property type="protein sequence ID" value="AT2G23610.1"/>
    <property type="gene ID" value="AT2G23610"/>
</dbReference>
<dbReference type="KEGG" id="ath:AT2G23610"/>
<dbReference type="Araport" id="AT2G23610"/>
<dbReference type="TAIR" id="AT2G23610">
    <property type="gene designation" value="MES3"/>
</dbReference>
<dbReference type="eggNOG" id="ENOG502QR2J">
    <property type="taxonomic scope" value="Eukaryota"/>
</dbReference>
<dbReference type="HOGENOM" id="CLU_046066_0_1_1"/>
<dbReference type="InParanoid" id="O80477"/>
<dbReference type="OMA" id="HDYCKPL"/>
<dbReference type="PhylomeDB" id="O80477"/>
<dbReference type="BioCyc" id="ARA:AT2G23610-MONOMER"/>
<dbReference type="UniPathway" id="UPA00382"/>
<dbReference type="PRO" id="PR:O80477"/>
<dbReference type="Proteomes" id="UP000006548">
    <property type="component" value="Chromosome 2"/>
</dbReference>
<dbReference type="ExpressionAtlas" id="O80477">
    <property type="expression patterns" value="baseline and differential"/>
</dbReference>
<dbReference type="GO" id="GO:0005773">
    <property type="term" value="C:vacuole"/>
    <property type="evidence" value="ECO:0007005"/>
    <property type="project" value="TAIR"/>
</dbReference>
<dbReference type="GO" id="GO:0016788">
    <property type="term" value="F:hydrolase activity, acting on ester bonds"/>
    <property type="evidence" value="ECO:0000314"/>
    <property type="project" value="TAIR"/>
</dbReference>
<dbReference type="GO" id="GO:0080030">
    <property type="term" value="F:methyl indole-3-acetate esterase activity"/>
    <property type="evidence" value="ECO:0000314"/>
    <property type="project" value="TAIR"/>
</dbReference>
<dbReference type="GO" id="GO:0080032">
    <property type="term" value="F:methyl jasmonate esterase activity"/>
    <property type="evidence" value="ECO:0000314"/>
    <property type="project" value="TAIR"/>
</dbReference>
<dbReference type="GO" id="GO:0031408">
    <property type="term" value="P:oxylipin biosynthetic process"/>
    <property type="evidence" value="ECO:0007669"/>
    <property type="project" value="UniProtKB-UniPathway"/>
</dbReference>
<dbReference type="FunFam" id="3.40.50.1820:FF:000051">
    <property type="entry name" value="(S)-hydroxynitrile lyase"/>
    <property type="match status" value="1"/>
</dbReference>
<dbReference type="Gene3D" id="3.40.50.1820">
    <property type="entry name" value="alpha/beta hydrolase"/>
    <property type="match status" value="1"/>
</dbReference>
<dbReference type="InterPro" id="IPR000073">
    <property type="entry name" value="AB_hydrolase_1"/>
</dbReference>
<dbReference type="InterPro" id="IPR029058">
    <property type="entry name" value="AB_hydrolase_fold"/>
</dbReference>
<dbReference type="InterPro" id="IPR045889">
    <property type="entry name" value="MES/HNL"/>
</dbReference>
<dbReference type="PANTHER" id="PTHR10992:SF1007">
    <property type="entry name" value="METHYLESTERASE 3-RELATED"/>
    <property type="match status" value="1"/>
</dbReference>
<dbReference type="PANTHER" id="PTHR10992">
    <property type="entry name" value="METHYLESTERASE FAMILY MEMBER"/>
    <property type="match status" value="1"/>
</dbReference>
<dbReference type="Pfam" id="PF12697">
    <property type="entry name" value="Abhydrolase_6"/>
    <property type="match status" value="1"/>
</dbReference>
<dbReference type="SUPFAM" id="SSF53474">
    <property type="entry name" value="alpha/beta-Hydrolases"/>
    <property type="match status" value="1"/>
</dbReference>
<dbReference type="PROSITE" id="PS00120">
    <property type="entry name" value="LIPASE_SER"/>
    <property type="match status" value="1"/>
</dbReference>
<proteinExistence type="evidence at protein level"/>
<name>MES3_ARATH</name>
<gene>
    <name evidence="3" type="primary">MES3</name>
    <name evidence="5" type="ordered locus">At2g23610</name>
    <name evidence="6" type="ORF">F26B6.26</name>
</gene>
<keyword id="KW-0378">Hydrolase</keyword>
<keyword id="KW-1185">Reference proteome</keyword>
<feature type="chain" id="PRO_0000418178" description="Methylesterase 3">
    <location>
        <begin position="1"/>
        <end position="263"/>
    </location>
</feature>
<feature type="active site" description="Acyl-ester intermediate" evidence="1">
    <location>
        <position position="85"/>
    </location>
</feature>
<feature type="active site" description="Charge relay system" evidence="1">
    <location>
        <position position="213"/>
    </location>
</feature>
<feature type="active site" description="Charge relay system" evidence="1">
    <location>
        <position position="241"/>
    </location>
</feature>